<protein>
    <recommendedName>
        <fullName evidence="1">Threonylcarbamoyl-AMP synthase</fullName>
        <shortName evidence="1">TC-AMP synthase</shortName>
        <ecNumber evidence="1">2.7.7.87</ecNumber>
    </recommendedName>
    <alternativeName>
        <fullName evidence="1">L-threonylcarbamoyladenylate synthase</fullName>
    </alternativeName>
    <alternativeName>
        <fullName evidence="1">t(6)A37 threonylcarbamoyladenosine biosynthesis protein TsaC</fullName>
    </alternativeName>
    <alternativeName>
        <fullName evidence="1">tRNA threonylcarbamoyladenosine biosynthesis protein TsaC</fullName>
    </alternativeName>
</protein>
<keyword id="KW-0067">ATP-binding</keyword>
<keyword id="KW-0963">Cytoplasm</keyword>
<keyword id="KW-0547">Nucleotide-binding</keyword>
<keyword id="KW-0548">Nucleotidyltransferase</keyword>
<keyword id="KW-0808">Transferase</keyword>
<keyword id="KW-0819">tRNA processing</keyword>
<name>TSAC_SALPB</name>
<proteinExistence type="inferred from homology"/>
<gene>
    <name evidence="1" type="primary">tsaC</name>
    <name type="synonym">rimN</name>
    <name type="ordered locus">SPAB_04243</name>
</gene>
<sequence length="190" mass="20352">MNNNLPTGSIAAAVDLLNKENVIAYPTEAVFGVGCDPDSETAVTRLLALKQRPVDKGLILIAASFEQLKPYIDDSILTAAQRKAVFDCWPGPVTFVFPAPATTPRWLTGRFDSLAVRVTNHPLVVALCNAYGKPLVSTSANLSGLPPCRTVEEVRAQFGDDFPVVEGATGGRLNPSEIRDALTGELFRQG</sequence>
<feature type="chain" id="PRO_0000352970" description="Threonylcarbamoyl-AMP synthase">
    <location>
        <begin position="1"/>
        <end position="190"/>
    </location>
</feature>
<feature type="domain" description="YrdC-like" evidence="1">
    <location>
        <begin position="7"/>
        <end position="190"/>
    </location>
</feature>
<dbReference type="EC" id="2.7.7.87" evidence="1"/>
<dbReference type="EMBL" id="CP000886">
    <property type="protein sequence ID" value="ABX69560.1"/>
    <property type="molecule type" value="Genomic_DNA"/>
</dbReference>
<dbReference type="RefSeq" id="WP_001063613.1">
    <property type="nucleotide sequence ID" value="NC_010102.1"/>
</dbReference>
<dbReference type="SMR" id="A9N8A7"/>
<dbReference type="KEGG" id="spq:SPAB_04243"/>
<dbReference type="PATRIC" id="fig|1016998.12.peg.3990"/>
<dbReference type="HOGENOM" id="CLU_031397_6_0_6"/>
<dbReference type="BioCyc" id="SENT1016998:SPAB_RS17245-MONOMER"/>
<dbReference type="Proteomes" id="UP000008556">
    <property type="component" value="Chromosome"/>
</dbReference>
<dbReference type="GO" id="GO:0005737">
    <property type="term" value="C:cytoplasm"/>
    <property type="evidence" value="ECO:0007669"/>
    <property type="project" value="UniProtKB-SubCell"/>
</dbReference>
<dbReference type="GO" id="GO:0005524">
    <property type="term" value="F:ATP binding"/>
    <property type="evidence" value="ECO:0007669"/>
    <property type="project" value="UniProtKB-UniRule"/>
</dbReference>
<dbReference type="GO" id="GO:0003725">
    <property type="term" value="F:double-stranded RNA binding"/>
    <property type="evidence" value="ECO:0007669"/>
    <property type="project" value="InterPro"/>
</dbReference>
<dbReference type="GO" id="GO:0061710">
    <property type="term" value="F:L-threonylcarbamoyladenylate synthase"/>
    <property type="evidence" value="ECO:0007669"/>
    <property type="project" value="UniProtKB-EC"/>
</dbReference>
<dbReference type="GO" id="GO:0000049">
    <property type="term" value="F:tRNA binding"/>
    <property type="evidence" value="ECO:0007669"/>
    <property type="project" value="TreeGrafter"/>
</dbReference>
<dbReference type="GO" id="GO:0006450">
    <property type="term" value="P:regulation of translational fidelity"/>
    <property type="evidence" value="ECO:0007669"/>
    <property type="project" value="TreeGrafter"/>
</dbReference>
<dbReference type="GO" id="GO:0002949">
    <property type="term" value="P:tRNA threonylcarbamoyladenosine modification"/>
    <property type="evidence" value="ECO:0007669"/>
    <property type="project" value="UniProtKB-UniRule"/>
</dbReference>
<dbReference type="FunFam" id="3.90.870.10:FF:000004">
    <property type="entry name" value="Threonylcarbamoyl-AMP synthase"/>
    <property type="match status" value="1"/>
</dbReference>
<dbReference type="Gene3D" id="3.90.870.10">
    <property type="entry name" value="DHBP synthase"/>
    <property type="match status" value="1"/>
</dbReference>
<dbReference type="HAMAP" id="MF_01852">
    <property type="entry name" value="TsaC"/>
    <property type="match status" value="1"/>
</dbReference>
<dbReference type="InterPro" id="IPR017945">
    <property type="entry name" value="DHBP_synth_RibB-like_a/b_dom"/>
</dbReference>
<dbReference type="InterPro" id="IPR006070">
    <property type="entry name" value="Sua5-like_dom"/>
</dbReference>
<dbReference type="InterPro" id="IPR023535">
    <property type="entry name" value="TC-AMP_synthase"/>
</dbReference>
<dbReference type="InterPro" id="IPR050156">
    <property type="entry name" value="TC-AMP_synthase_SUA5"/>
</dbReference>
<dbReference type="NCBIfam" id="NF007919">
    <property type="entry name" value="PRK10634.1"/>
    <property type="match status" value="1"/>
</dbReference>
<dbReference type="PANTHER" id="PTHR17490">
    <property type="entry name" value="SUA5"/>
    <property type="match status" value="1"/>
</dbReference>
<dbReference type="PANTHER" id="PTHR17490:SF18">
    <property type="entry name" value="THREONYLCARBAMOYL-AMP SYNTHASE"/>
    <property type="match status" value="1"/>
</dbReference>
<dbReference type="Pfam" id="PF01300">
    <property type="entry name" value="Sua5_yciO_yrdC"/>
    <property type="match status" value="1"/>
</dbReference>
<dbReference type="SUPFAM" id="SSF55821">
    <property type="entry name" value="YrdC/RibB"/>
    <property type="match status" value="1"/>
</dbReference>
<dbReference type="PROSITE" id="PS51163">
    <property type="entry name" value="YRDC"/>
    <property type="match status" value="1"/>
</dbReference>
<organism>
    <name type="scientific">Salmonella paratyphi B (strain ATCC BAA-1250 / SPB7)</name>
    <dbReference type="NCBI Taxonomy" id="1016998"/>
    <lineage>
        <taxon>Bacteria</taxon>
        <taxon>Pseudomonadati</taxon>
        <taxon>Pseudomonadota</taxon>
        <taxon>Gammaproteobacteria</taxon>
        <taxon>Enterobacterales</taxon>
        <taxon>Enterobacteriaceae</taxon>
        <taxon>Salmonella</taxon>
    </lineage>
</organism>
<comment type="function">
    <text evidence="1">Required for the formation of a threonylcarbamoyl group on adenosine at position 37 (t(6)A37) in tRNAs that read codons beginning with adenine. Catalyzes the conversion of L-threonine, HCO(3)(-)/CO(2) and ATP to give threonylcarbamoyl-AMP (TC-AMP) as the acyladenylate intermediate, with the release of diphosphate.</text>
</comment>
<comment type="catalytic activity">
    <reaction evidence="1">
        <text>L-threonine + hydrogencarbonate + ATP = L-threonylcarbamoyladenylate + diphosphate + H2O</text>
        <dbReference type="Rhea" id="RHEA:36407"/>
        <dbReference type="ChEBI" id="CHEBI:15377"/>
        <dbReference type="ChEBI" id="CHEBI:17544"/>
        <dbReference type="ChEBI" id="CHEBI:30616"/>
        <dbReference type="ChEBI" id="CHEBI:33019"/>
        <dbReference type="ChEBI" id="CHEBI:57926"/>
        <dbReference type="ChEBI" id="CHEBI:73682"/>
        <dbReference type="EC" id="2.7.7.87"/>
    </reaction>
</comment>
<comment type="subcellular location">
    <subcellularLocation>
        <location evidence="1">Cytoplasm</location>
    </subcellularLocation>
</comment>
<comment type="similarity">
    <text evidence="1">Belongs to the SUA5 family. TsaC subfamily.</text>
</comment>
<reference key="1">
    <citation type="submission" date="2007-11" db="EMBL/GenBank/DDBJ databases">
        <authorList>
            <consortium name="The Salmonella enterica serovar Paratyphi B Genome Sequencing Project"/>
            <person name="McClelland M."/>
            <person name="Sanderson E.K."/>
            <person name="Porwollik S."/>
            <person name="Spieth J."/>
            <person name="Clifton W.S."/>
            <person name="Fulton R."/>
            <person name="Cordes M."/>
            <person name="Wollam A."/>
            <person name="Shah N."/>
            <person name="Pepin K."/>
            <person name="Bhonagiri V."/>
            <person name="Nash W."/>
            <person name="Johnson M."/>
            <person name="Thiruvilangam P."/>
            <person name="Wilson R."/>
        </authorList>
    </citation>
    <scope>NUCLEOTIDE SEQUENCE [LARGE SCALE GENOMIC DNA]</scope>
    <source>
        <strain>ATCC BAA-1250 / SPB7</strain>
    </source>
</reference>
<accession>A9N8A7</accession>
<evidence type="ECO:0000255" key="1">
    <source>
        <dbReference type="HAMAP-Rule" id="MF_01852"/>
    </source>
</evidence>